<dbReference type="EC" id="3.6.5.3" evidence="2"/>
<dbReference type="EMBL" id="AE008691">
    <property type="protein sequence ID" value="AAM25451.1"/>
    <property type="molecule type" value="Genomic_DNA"/>
</dbReference>
<dbReference type="RefSeq" id="WP_011026354.1">
    <property type="nucleotide sequence ID" value="NC_003869.1"/>
</dbReference>
<dbReference type="SMR" id="Q8R7T8"/>
<dbReference type="STRING" id="273068.TTE2310"/>
<dbReference type="KEGG" id="tte:TTE2310"/>
<dbReference type="eggNOG" id="COG0050">
    <property type="taxonomic scope" value="Bacteria"/>
</dbReference>
<dbReference type="HOGENOM" id="CLU_007265_0_0_9"/>
<dbReference type="OrthoDB" id="9804504at2"/>
<dbReference type="Proteomes" id="UP000000555">
    <property type="component" value="Chromosome"/>
</dbReference>
<dbReference type="GO" id="GO:0005829">
    <property type="term" value="C:cytosol"/>
    <property type="evidence" value="ECO:0007669"/>
    <property type="project" value="TreeGrafter"/>
</dbReference>
<dbReference type="GO" id="GO:0005525">
    <property type="term" value="F:GTP binding"/>
    <property type="evidence" value="ECO:0007669"/>
    <property type="project" value="UniProtKB-UniRule"/>
</dbReference>
<dbReference type="GO" id="GO:0003924">
    <property type="term" value="F:GTPase activity"/>
    <property type="evidence" value="ECO:0007669"/>
    <property type="project" value="InterPro"/>
</dbReference>
<dbReference type="GO" id="GO:0003746">
    <property type="term" value="F:translation elongation factor activity"/>
    <property type="evidence" value="ECO:0007669"/>
    <property type="project" value="UniProtKB-UniRule"/>
</dbReference>
<dbReference type="CDD" id="cd01884">
    <property type="entry name" value="EF_Tu"/>
    <property type="match status" value="1"/>
</dbReference>
<dbReference type="CDD" id="cd03697">
    <property type="entry name" value="EFTU_II"/>
    <property type="match status" value="1"/>
</dbReference>
<dbReference type="CDD" id="cd03707">
    <property type="entry name" value="EFTU_III"/>
    <property type="match status" value="1"/>
</dbReference>
<dbReference type="FunFam" id="2.40.30.10:FF:000001">
    <property type="entry name" value="Elongation factor Tu"/>
    <property type="match status" value="1"/>
</dbReference>
<dbReference type="FunFam" id="3.40.50.300:FF:000003">
    <property type="entry name" value="Elongation factor Tu"/>
    <property type="match status" value="1"/>
</dbReference>
<dbReference type="Gene3D" id="3.40.50.300">
    <property type="entry name" value="P-loop containing nucleotide triphosphate hydrolases"/>
    <property type="match status" value="1"/>
</dbReference>
<dbReference type="Gene3D" id="2.40.30.10">
    <property type="entry name" value="Translation factors"/>
    <property type="match status" value="2"/>
</dbReference>
<dbReference type="HAMAP" id="MF_00118_B">
    <property type="entry name" value="EF_Tu_B"/>
    <property type="match status" value="1"/>
</dbReference>
<dbReference type="InterPro" id="IPR041709">
    <property type="entry name" value="EF-Tu_GTP-bd"/>
</dbReference>
<dbReference type="InterPro" id="IPR050055">
    <property type="entry name" value="EF-Tu_GTPase"/>
</dbReference>
<dbReference type="InterPro" id="IPR004161">
    <property type="entry name" value="EFTu-like_2"/>
</dbReference>
<dbReference type="InterPro" id="IPR033720">
    <property type="entry name" value="EFTU_2"/>
</dbReference>
<dbReference type="InterPro" id="IPR031157">
    <property type="entry name" value="G_TR_CS"/>
</dbReference>
<dbReference type="InterPro" id="IPR027417">
    <property type="entry name" value="P-loop_NTPase"/>
</dbReference>
<dbReference type="InterPro" id="IPR005225">
    <property type="entry name" value="Small_GTP-bd"/>
</dbReference>
<dbReference type="InterPro" id="IPR000795">
    <property type="entry name" value="T_Tr_GTP-bd_dom"/>
</dbReference>
<dbReference type="InterPro" id="IPR009000">
    <property type="entry name" value="Transl_B-barrel_sf"/>
</dbReference>
<dbReference type="InterPro" id="IPR009001">
    <property type="entry name" value="Transl_elong_EF1A/Init_IF2_C"/>
</dbReference>
<dbReference type="InterPro" id="IPR004541">
    <property type="entry name" value="Transl_elong_EFTu/EF1A_bac/org"/>
</dbReference>
<dbReference type="InterPro" id="IPR004160">
    <property type="entry name" value="Transl_elong_EFTu/EF1A_C"/>
</dbReference>
<dbReference type="NCBIfam" id="TIGR00485">
    <property type="entry name" value="EF-Tu"/>
    <property type="match status" value="1"/>
</dbReference>
<dbReference type="NCBIfam" id="NF000766">
    <property type="entry name" value="PRK00049.1"/>
    <property type="match status" value="1"/>
</dbReference>
<dbReference type="NCBIfam" id="NF009372">
    <property type="entry name" value="PRK12735.1"/>
    <property type="match status" value="1"/>
</dbReference>
<dbReference type="NCBIfam" id="NF009373">
    <property type="entry name" value="PRK12736.1"/>
    <property type="match status" value="1"/>
</dbReference>
<dbReference type="NCBIfam" id="TIGR00231">
    <property type="entry name" value="small_GTP"/>
    <property type="match status" value="1"/>
</dbReference>
<dbReference type="PANTHER" id="PTHR43721:SF22">
    <property type="entry name" value="ELONGATION FACTOR TU, MITOCHONDRIAL"/>
    <property type="match status" value="1"/>
</dbReference>
<dbReference type="PANTHER" id="PTHR43721">
    <property type="entry name" value="ELONGATION FACTOR TU-RELATED"/>
    <property type="match status" value="1"/>
</dbReference>
<dbReference type="Pfam" id="PF00009">
    <property type="entry name" value="GTP_EFTU"/>
    <property type="match status" value="1"/>
</dbReference>
<dbReference type="Pfam" id="PF03144">
    <property type="entry name" value="GTP_EFTU_D2"/>
    <property type="match status" value="1"/>
</dbReference>
<dbReference type="Pfam" id="PF03143">
    <property type="entry name" value="GTP_EFTU_D3"/>
    <property type="match status" value="1"/>
</dbReference>
<dbReference type="PRINTS" id="PR00315">
    <property type="entry name" value="ELONGATNFCT"/>
</dbReference>
<dbReference type="SUPFAM" id="SSF50465">
    <property type="entry name" value="EF-Tu/eEF-1alpha/eIF2-gamma C-terminal domain"/>
    <property type="match status" value="1"/>
</dbReference>
<dbReference type="SUPFAM" id="SSF52540">
    <property type="entry name" value="P-loop containing nucleoside triphosphate hydrolases"/>
    <property type="match status" value="1"/>
</dbReference>
<dbReference type="SUPFAM" id="SSF50447">
    <property type="entry name" value="Translation proteins"/>
    <property type="match status" value="1"/>
</dbReference>
<dbReference type="PROSITE" id="PS00301">
    <property type="entry name" value="G_TR_1"/>
    <property type="match status" value="1"/>
</dbReference>
<dbReference type="PROSITE" id="PS51722">
    <property type="entry name" value="G_TR_2"/>
    <property type="match status" value="1"/>
</dbReference>
<gene>
    <name evidence="2" type="primary">tufB</name>
    <name type="ordered locus">TTE2310</name>
</gene>
<proteinExistence type="inferred from homology"/>
<sequence>MAKQKFERTKPHVNVGTIGHVDHGKTTLTAAITLILSKAGLAQAKGYDEIDKAPEEKARGITINTTHVEYETAKRHYAHVDCPGHADYVKNMITGAAQMDGAILVVSAADGPMPQTREHILLARQVGVPYIVVFLNKADMVDDPELIELVEMEVRDLLNQYEFPGDETPIVVGSALKALECGCGKRECQWCGKIWELMDVVDEYIPTPERDIDKPFLMPVEDVFSITGRGTVATGRVERGKVKVGDEVEIIGLTTESRKTVVTGVEMFRKTLDEAQAGDNIGVLLRGIQKDEVERGQVLAKPGTIKPHTKFEAQVYVLTKEEGGRHTPFFNGYRPQFYFRTTDVTGTIQLPEGVEMVMPGDHVTLRVELITPIAMEEGLKFAIREGGRTVGAGVVSAIIE</sequence>
<keyword id="KW-0963">Cytoplasm</keyword>
<keyword id="KW-0251">Elongation factor</keyword>
<keyword id="KW-0342">GTP-binding</keyword>
<keyword id="KW-0378">Hydrolase</keyword>
<keyword id="KW-0460">Magnesium</keyword>
<keyword id="KW-0479">Metal-binding</keyword>
<keyword id="KW-0547">Nucleotide-binding</keyword>
<keyword id="KW-0648">Protein biosynthesis</keyword>
<keyword id="KW-1185">Reference proteome</keyword>
<feature type="chain" id="PRO_0000091426" description="Elongation factor Tu-B">
    <location>
        <begin position="1"/>
        <end position="400"/>
    </location>
</feature>
<feature type="domain" description="tr-type G">
    <location>
        <begin position="10"/>
        <end position="209"/>
    </location>
</feature>
<feature type="region of interest" description="G1" evidence="1">
    <location>
        <begin position="19"/>
        <end position="26"/>
    </location>
</feature>
<feature type="region of interest" description="G2" evidence="1">
    <location>
        <begin position="60"/>
        <end position="64"/>
    </location>
</feature>
<feature type="region of interest" description="G3" evidence="1">
    <location>
        <begin position="81"/>
        <end position="84"/>
    </location>
</feature>
<feature type="region of interest" description="G4" evidence="1">
    <location>
        <begin position="136"/>
        <end position="139"/>
    </location>
</feature>
<feature type="region of interest" description="G5" evidence="1">
    <location>
        <begin position="174"/>
        <end position="176"/>
    </location>
</feature>
<feature type="binding site" evidence="2">
    <location>
        <begin position="19"/>
        <end position="26"/>
    </location>
    <ligand>
        <name>GTP</name>
        <dbReference type="ChEBI" id="CHEBI:37565"/>
    </ligand>
</feature>
<feature type="binding site" evidence="2">
    <location>
        <position position="26"/>
    </location>
    <ligand>
        <name>Mg(2+)</name>
        <dbReference type="ChEBI" id="CHEBI:18420"/>
    </ligand>
</feature>
<feature type="binding site" evidence="2">
    <location>
        <begin position="81"/>
        <end position="85"/>
    </location>
    <ligand>
        <name>GTP</name>
        <dbReference type="ChEBI" id="CHEBI:37565"/>
    </ligand>
</feature>
<feature type="binding site" evidence="2">
    <location>
        <begin position="136"/>
        <end position="139"/>
    </location>
    <ligand>
        <name>GTP</name>
        <dbReference type="ChEBI" id="CHEBI:37565"/>
    </ligand>
</feature>
<protein>
    <recommendedName>
        <fullName evidence="2">Elongation factor Tu-B</fullName>
        <shortName evidence="2">EF-Tu-B</shortName>
        <ecNumber evidence="2">3.6.5.3</ecNumber>
    </recommendedName>
</protein>
<evidence type="ECO:0000250" key="1"/>
<evidence type="ECO:0000255" key="2">
    <source>
        <dbReference type="HAMAP-Rule" id="MF_00118"/>
    </source>
</evidence>
<comment type="function">
    <text evidence="2">GTP hydrolase that promotes the GTP-dependent binding of aminoacyl-tRNA to the A-site of ribosomes during protein biosynthesis.</text>
</comment>
<comment type="catalytic activity">
    <reaction evidence="2">
        <text>GTP + H2O = GDP + phosphate + H(+)</text>
        <dbReference type="Rhea" id="RHEA:19669"/>
        <dbReference type="ChEBI" id="CHEBI:15377"/>
        <dbReference type="ChEBI" id="CHEBI:15378"/>
        <dbReference type="ChEBI" id="CHEBI:37565"/>
        <dbReference type="ChEBI" id="CHEBI:43474"/>
        <dbReference type="ChEBI" id="CHEBI:58189"/>
        <dbReference type="EC" id="3.6.5.3"/>
    </reaction>
    <physiologicalReaction direction="left-to-right" evidence="2">
        <dbReference type="Rhea" id="RHEA:19670"/>
    </physiologicalReaction>
</comment>
<comment type="subunit">
    <text evidence="2">Monomer.</text>
</comment>
<comment type="subcellular location">
    <subcellularLocation>
        <location evidence="2">Cytoplasm</location>
    </subcellularLocation>
</comment>
<comment type="similarity">
    <text evidence="2">Belongs to the TRAFAC class translation factor GTPase superfamily. Classic translation factor GTPase family. EF-Tu/EF-1A subfamily.</text>
</comment>
<accession>Q8R7T8</accession>
<name>EFTU2_CALS4</name>
<organism>
    <name type="scientific">Caldanaerobacter subterraneus subsp. tengcongensis (strain DSM 15242 / JCM 11007 / NBRC 100824 / MB4)</name>
    <name type="common">Thermoanaerobacter tengcongensis</name>
    <dbReference type="NCBI Taxonomy" id="273068"/>
    <lineage>
        <taxon>Bacteria</taxon>
        <taxon>Bacillati</taxon>
        <taxon>Bacillota</taxon>
        <taxon>Clostridia</taxon>
        <taxon>Thermoanaerobacterales</taxon>
        <taxon>Thermoanaerobacteraceae</taxon>
        <taxon>Caldanaerobacter</taxon>
    </lineage>
</organism>
<reference key="1">
    <citation type="journal article" date="2002" name="Genome Res.">
        <title>A complete sequence of the T. tengcongensis genome.</title>
        <authorList>
            <person name="Bao Q."/>
            <person name="Tian Y."/>
            <person name="Li W."/>
            <person name="Xu Z."/>
            <person name="Xuan Z."/>
            <person name="Hu S."/>
            <person name="Dong W."/>
            <person name="Yang J."/>
            <person name="Chen Y."/>
            <person name="Xue Y."/>
            <person name="Xu Y."/>
            <person name="Lai X."/>
            <person name="Huang L."/>
            <person name="Dong X."/>
            <person name="Ma Y."/>
            <person name="Ling L."/>
            <person name="Tan H."/>
            <person name="Chen R."/>
            <person name="Wang J."/>
            <person name="Yu J."/>
            <person name="Yang H."/>
        </authorList>
    </citation>
    <scope>NUCLEOTIDE SEQUENCE [LARGE SCALE GENOMIC DNA]</scope>
    <source>
        <strain>DSM 15242 / JCM 11007 / NBRC 100824 / MB4</strain>
    </source>
</reference>